<dbReference type="EC" id="6.3.5.2" evidence="1"/>
<dbReference type="EMBL" id="BA000030">
    <property type="protein sequence ID" value="BAC71191.1"/>
    <property type="molecule type" value="Genomic_DNA"/>
</dbReference>
<dbReference type="RefSeq" id="WP_010984910.1">
    <property type="nucleotide sequence ID" value="NZ_JZJK01000090.1"/>
</dbReference>
<dbReference type="SMR" id="Q82HM9"/>
<dbReference type="GeneID" id="41540543"/>
<dbReference type="KEGG" id="sma:SAVERM_3479"/>
<dbReference type="eggNOG" id="COG0518">
    <property type="taxonomic scope" value="Bacteria"/>
</dbReference>
<dbReference type="eggNOG" id="COG0519">
    <property type="taxonomic scope" value="Bacteria"/>
</dbReference>
<dbReference type="HOGENOM" id="CLU_014340_0_5_11"/>
<dbReference type="OrthoDB" id="9802219at2"/>
<dbReference type="UniPathway" id="UPA00189">
    <property type="reaction ID" value="UER00296"/>
</dbReference>
<dbReference type="Proteomes" id="UP000000428">
    <property type="component" value="Chromosome"/>
</dbReference>
<dbReference type="GO" id="GO:0005829">
    <property type="term" value="C:cytosol"/>
    <property type="evidence" value="ECO:0007669"/>
    <property type="project" value="TreeGrafter"/>
</dbReference>
<dbReference type="GO" id="GO:0005524">
    <property type="term" value="F:ATP binding"/>
    <property type="evidence" value="ECO:0007669"/>
    <property type="project" value="UniProtKB-UniRule"/>
</dbReference>
<dbReference type="GO" id="GO:0003921">
    <property type="term" value="F:GMP synthase activity"/>
    <property type="evidence" value="ECO:0007669"/>
    <property type="project" value="InterPro"/>
</dbReference>
<dbReference type="CDD" id="cd01742">
    <property type="entry name" value="GATase1_GMP_Synthase"/>
    <property type="match status" value="1"/>
</dbReference>
<dbReference type="CDD" id="cd01997">
    <property type="entry name" value="GMP_synthase_C"/>
    <property type="match status" value="1"/>
</dbReference>
<dbReference type="FunFam" id="3.30.300.10:FF:000002">
    <property type="entry name" value="GMP synthase [glutamine-hydrolyzing]"/>
    <property type="match status" value="1"/>
</dbReference>
<dbReference type="FunFam" id="3.40.50.620:FF:000001">
    <property type="entry name" value="GMP synthase [glutamine-hydrolyzing]"/>
    <property type="match status" value="1"/>
</dbReference>
<dbReference type="FunFam" id="3.40.50.880:FF:000001">
    <property type="entry name" value="GMP synthase [glutamine-hydrolyzing]"/>
    <property type="match status" value="1"/>
</dbReference>
<dbReference type="Gene3D" id="3.30.300.10">
    <property type="match status" value="1"/>
</dbReference>
<dbReference type="Gene3D" id="3.40.50.880">
    <property type="match status" value="1"/>
</dbReference>
<dbReference type="Gene3D" id="3.40.50.620">
    <property type="entry name" value="HUPs"/>
    <property type="match status" value="1"/>
</dbReference>
<dbReference type="HAMAP" id="MF_00344">
    <property type="entry name" value="GMP_synthase"/>
    <property type="match status" value="1"/>
</dbReference>
<dbReference type="InterPro" id="IPR029062">
    <property type="entry name" value="Class_I_gatase-like"/>
</dbReference>
<dbReference type="InterPro" id="IPR017926">
    <property type="entry name" value="GATASE"/>
</dbReference>
<dbReference type="InterPro" id="IPR001674">
    <property type="entry name" value="GMP_synth_C"/>
</dbReference>
<dbReference type="InterPro" id="IPR004739">
    <property type="entry name" value="GMP_synth_GATase"/>
</dbReference>
<dbReference type="InterPro" id="IPR022955">
    <property type="entry name" value="GMP_synthase"/>
</dbReference>
<dbReference type="InterPro" id="IPR025777">
    <property type="entry name" value="GMPS_ATP_PPase_dom"/>
</dbReference>
<dbReference type="InterPro" id="IPR022310">
    <property type="entry name" value="NAD/GMP_synthase"/>
</dbReference>
<dbReference type="InterPro" id="IPR014729">
    <property type="entry name" value="Rossmann-like_a/b/a_fold"/>
</dbReference>
<dbReference type="NCBIfam" id="TIGR00884">
    <property type="entry name" value="guaA_Cterm"/>
    <property type="match status" value="1"/>
</dbReference>
<dbReference type="NCBIfam" id="TIGR00888">
    <property type="entry name" value="guaA_Nterm"/>
    <property type="match status" value="1"/>
</dbReference>
<dbReference type="NCBIfam" id="NF000848">
    <property type="entry name" value="PRK00074.1"/>
    <property type="match status" value="1"/>
</dbReference>
<dbReference type="PANTHER" id="PTHR11922:SF2">
    <property type="entry name" value="GMP SYNTHASE [GLUTAMINE-HYDROLYZING]"/>
    <property type="match status" value="1"/>
</dbReference>
<dbReference type="PANTHER" id="PTHR11922">
    <property type="entry name" value="GMP SYNTHASE-RELATED"/>
    <property type="match status" value="1"/>
</dbReference>
<dbReference type="Pfam" id="PF00117">
    <property type="entry name" value="GATase"/>
    <property type="match status" value="1"/>
</dbReference>
<dbReference type="Pfam" id="PF00958">
    <property type="entry name" value="GMP_synt_C"/>
    <property type="match status" value="1"/>
</dbReference>
<dbReference type="Pfam" id="PF02540">
    <property type="entry name" value="NAD_synthase"/>
    <property type="match status" value="1"/>
</dbReference>
<dbReference type="PRINTS" id="PR00097">
    <property type="entry name" value="ANTSNTHASEII"/>
</dbReference>
<dbReference type="PRINTS" id="PR00099">
    <property type="entry name" value="CPSGATASE"/>
</dbReference>
<dbReference type="PRINTS" id="PR00096">
    <property type="entry name" value="GATASE"/>
</dbReference>
<dbReference type="SUPFAM" id="SSF52402">
    <property type="entry name" value="Adenine nucleotide alpha hydrolases-like"/>
    <property type="match status" value="1"/>
</dbReference>
<dbReference type="SUPFAM" id="SSF52317">
    <property type="entry name" value="Class I glutamine amidotransferase-like"/>
    <property type="match status" value="1"/>
</dbReference>
<dbReference type="SUPFAM" id="SSF54810">
    <property type="entry name" value="GMP synthetase C-terminal dimerisation domain"/>
    <property type="match status" value="1"/>
</dbReference>
<dbReference type="PROSITE" id="PS51273">
    <property type="entry name" value="GATASE_TYPE_1"/>
    <property type="match status" value="1"/>
</dbReference>
<dbReference type="PROSITE" id="PS51553">
    <property type="entry name" value="GMPS_ATP_PPASE"/>
    <property type="match status" value="1"/>
</dbReference>
<protein>
    <recommendedName>
        <fullName evidence="1">GMP synthase [glutamine-hydrolyzing]</fullName>
        <ecNumber evidence="1">6.3.5.2</ecNumber>
    </recommendedName>
    <alternativeName>
        <fullName evidence="1">GMP synthetase</fullName>
    </alternativeName>
    <alternativeName>
        <fullName evidence="1">Glutamine amidotransferase</fullName>
    </alternativeName>
</protein>
<organism>
    <name type="scientific">Streptomyces avermitilis (strain ATCC 31267 / DSM 46492 / JCM 5070 / NBRC 14893 / NCIMB 12804 / NRRL 8165 / MA-4680)</name>
    <dbReference type="NCBI Taxonomy" id="227882"/>
    <lineage>
        <taxon>Bacteria</taxon>
        <taxon>Bacillati</taxon>
        <taxon>Actinomycetota</taxon>
        <taxon>Actinomycetes</taxon>
        <taxon>Kitasatosporales</taxon>
        <taxon>Streptomycetaceae</taxon>
        <taxon>Streptomyces</taxon>
    </lineage>
</organism>
<name>GUAA_STRAW</name>
<accession>Q82HM9</accession>
<keyword id="KW-0067">ATP-binding</keyword>
<keyword id="KW-0315">Glutamine amidotransferase</keyword>
<keyword id="KW-0332">GMP biosynthesis</keyword>
<keyword id="KW-0436">Ligase</keyword>
<keyword id="KW-0547">Nucleotide-binding</keyword>
<keyword id="KW-0658">Purine biosynthesis</keyword>
<keyword id="KW-1185">Reference proteome</keyword>
<feature type="chain" id="PRO_0000140185" description="GMP synthase [glutamine-hydrolyzing]">
    <location>
        <begin position="1"/>
        <end position="525"/>
    </location>
</feature>
<feature type="domain" description="Glutamine amidotransferase type-1" evidence="1">
    <location>
        <begin position="12"/>
        <end position="203"/>
    </location>
</feature>
<feature type="domain" description="GMPS ATP-PPase" evidence="1">
    <location>
        <begin position="204"/>
        <end position="399"/>
    </location>
</feature>
<feature type="active site" description="Nucleophile" evidence="1">
    <location>
        <position position="89"/>
    </location>
</feature>
<feature type="active site" evidence="1">
    <location>
        <position position="177"/>
    </location>
</feature>
<feature type="active site" evidence="1">
    <location>
        <position position="179"/>
    </location>
</feature>
<feature type="binding site" evidence="1">
    <location>
        <begin position="231"/>
        <end position="237"/>
    </location>
    <ligand>
        <name>ATP</name>
        <dbReference type="ChEBI" id="CHEBI:30616"/>
    </ligand>
</feature>
<proteinExistence type="inferred from homology"/>
<sequence>MPSAPSAAAPDTVLVVDFGAQYAQLIARRVREARVYSEIVPSTMPVAEMLAKNPAAIILSGGPSSVYAEGAPRLDREIFEAGVPVFGMCYGFQLMATTLGGTVDNTGAREYGRTPLHVSKSGSTLFEGTPDEQPVWMSHGDACSAAPEGFTVTASTDVVPVAAFENDEKRLYGVQYHPEVMHSTHGQQVLEHFLYRGAGLTPSWTTGNVIDEQVELIREQVGTRRAICGLSGGVDSAVAAALVQKAIGSQLTCVYVDHGLMRQGETEQVEKDFVAATGVQLKVVDAEERFLTALKGVSDPEEKRKIIGREFIRVFEQAQAEIIADEGPEVAFLVQGTLYPDVVESGGGTGTANIKSHHNVGGLPEDLEFELIEPLRKLFKDEVRMVGQELGLPDEIVQRQPFPGPGLGIRIVGEVTKERLDLLREADAIAREELTAAGLDREIWQCPVVLLADVRSVGVQGDGRTYGHPIVLRPVSSEDAMTADWSRLPYDTLAKISTRITNEVADVNRVVLDVTSKPPGTIEWE</sequence>
<evidence type="ECO:0000255" key="1">
    <source>
        <dbReference type="HAMAP-Rule" id="MF_00344"/>
    </source>
</evidence>
<reference key="1">
    <citation type="journal article" date="2001" name="Proc. Natl. Acad. Sci. U.S.A.">
        <title>Genome sequence of an industrial microorganism Streptomyces avermitilis: deducing the ability of producing secondary metabolites.</title>
        <authorList>
            <person name="Omura S."/>
            <person name="Ikeda H."/>
            <person name="Ishikawa J."/>
            <person name="Hanamoto A."/>
            <person name="Takahashi C."/>
            <person name="Shinose M."/>
            <person name="Takahashi Y."/>
            <person name="Horikawa H."/>
            <person name="Nakazawa H."/>
            <person name="Osonoe T."/>
            <person name="Kikuchi H."/>
            <person name="Shiba T."/>
            <person name="Sakaki Y."/>
            <person name="Hattori M."/>
        </authorList>
    </citation>
    <scope>NUCLEOTIDE SEQUENCE [LARGE SCALE GENOMIC DNA]</scope>
    <source>
        <strain>ATCC 31267 / DSM 46492 / JCM 5070 / NBRC 14893 / NCIMB 12804 / NRRL 8165 / MA-4680</strain>
    </source>
</reference>
<reference key="2">
    <citation type="journal article" date="2003" name="Nat. Biotechnol.">
        <title>Complete genome sequence and comparative analysis of the industrial microorganism Streptomyces avermitilis.</title>
        <authorList>
            <person name="Ikeda H."/>
            <person name="Ishikawa J."/>
            <person name="Hanamoto A."/>
            <person name="Shinose M."/>
            <person name="Kikuchi H."/>
            <person name="Shiba T."/>
            <person name="Sakaki Y."/>
            <person name="Hattori M."/>
            <person name="Omura S."/>
        </authorList>
    </citation>
    <scope>NUCLEOTIDE SEQUENCE [LARGE SCALE GENOMIC DNA]</scope>
    <source>
        <strain>ATCC 31267 / DSM 46492 / JCM 5070 / NBRC 14893 / NCIMB 12804 / NRRL 8165 / MA-4680</strain>
    </source>
</reference>
<comment type="function">
    <text evidence="1">Catalyzes the synthesis of GMP from XMP.</text>
</comment>
<comment type="catalytic activity">
    <reaction evidence="1">
        <text>XMP + L-glutamine + ATP + H2O = GMP + L-glutamate + AMP + diphosphate + 2 H(+)</text>
        <dbReference type="Rhea" id="RHEA:11680"/>
        <dbReference type="ChEBI" id="CHEBI:15377"/>
        <dbReference type="ChEBI" id="CHEBI:15378"/>
        <dbReference type="ChEBI" id="CHEBI:29985"/>
        <dbReference type="ChEBI" id="CHEBI:30616"/>
        <dbReference type="ChEBI" id="CHEBI:33019"/>
        <dbReference type="ChEBI" id="CHEBI:57464"/>
        <dbReference type="ChEBI" id="CHEBI:58115"/>
        <dbReference type="ChEBI" id="CHEBI:58359"/>
        <dbReference type="ChEBI" id="CHEBI:456215"/>
        <dbReference type="EC" id="6.3.5.2"/>
    </reaction>
</comment>
<comment type="pathway">
    <text evidence="1">Purine metabolism; GMP biosynthesis; GMP from XMP (L-Gln route): step 1/1.</text>
</comment>
<comment type="subunit">
    <text evidence="1">Homodimer.</text>
</comment>
<gene>
    <name evidence="1" type="primary">guaA</name>
    <name type="ordered locus">SAV_3479</name>
</gene>